<dbReference type="EMBL" id="AF296833">
    <property type="status" value="NOT_ANNOTATED_CDS"/>
    <property type="molecule type" value="Genomic_DNA"/>
</dbReference>
<dbReference type="EMBL" id="CP002688">
    <property type="protein sequence ID" value="AED92854.1"/>
    <property type="molecule type" value="Genomic_DNA"/>
</dbReference>
<dbReference type="EMBL" id="BT015937">
    <property type="protein sequence ID" value="AAV31167.1"/>
    <property type="molecule type" value="mRNA"/>
</dbReference>
<dbReference type="EMBL" id="BT020505">
    <property type="protein sequence ID" value="AAW39006.1"/>
    <property type="molecule type" value="mRNA"/>
</dbReference>
<dbReference type="RefSeq" id="NP_197551.2">
    <property type="nucleotide sequence ID" value="NM_122058.4"/>
</dbReference>
<dbReference type="SMR" id="Q5XEM9"/>
<dbReference type="BioGRID" id="17449">
    <property type="interactions" value="6"/>
</dbReference>
<dbReference type="FunCoup" id="Q5XEM9">
    <property type="interactions" value="166"/>
</dbReference>
<dbReference type="STRING" id="3702.Q5XEM9"/>
<dbReference type="PaxDb" id="3702-AT5G20510.1"/>
<dbReference type="ProteomicsDB" id="244897"/>
<dbReference type="EnsemblPlants" id="AT5G20510.1">
    <property type="protein sequence ID" value="AT5G20510.1"/>
    <property type="gene ID" value="AT5G20510"/>
</dbReference>
<dbReference type="GeneID" id="832173"/>
<dbReference type="Gramene" id="AT5G20510.1">
    <property type="protein sequence ID" value="AT5G20510.1"/>
    <property type="gene ID" value="AT5G20510"/>
</dbReference>
<dbReference type="KEGG" id="ath:AT5G20510"/>
<dbReference type="Araport" id="AT5G20510"/>
<dbReference type="TAIR" id="AT5G20510">
    <property type="gene designation" value="AL5"/>
</dbReference>
<dbReference type="eggNOG" id="KOG1632">
    <property type="taxonomic scope" value="Eukaryota"/>
</dbReference>
<dbReference type="HOGENOM" id="CLU_058315_0_0_1"/>
<dbReference type="InParanoid" id="Q5XEM9"/>
<dbReference type="OMA" id="DHESTLC"/>
<dbReference type="OrthoDB" id="436852at2759"/>
<dbReference type="PhylomeDB" id="Q5XEM9"/>
<dbReference type="PRO" id="PR:Q5XEM9"/>
<dbReference type="Proteomes" id="UP000006548">
    <property type="component" value="Chromosome 5"/>
</dbReference>
<dbReference type="ExpressionAtlas" id="Q5XEM9">
    <property type="expression patterns" value="baseline and differential"/>
</dbReference>
<dbReference type="GO" id="GO:0005634">
    <property type="term" value="C:nucleus"/>
    <property type="evidence" value="ECO:0000314"/>
    <property type="project" value="TAIR"/>
</dbReference>
<dbReference type="GO" id="GO:0003677">
    <property type="term" value="F:DNA binding"/>
    <property type="evidence" value="ECO:0000314"/>
    <property type="project" value="TAIR"/>
</dbReference>
<dbReference type="GO" id="GO:0042393">
    <property type="term" value="F:histone binding"/>
    <property type="evidence" value="ECO:0007669"/>
    <property type="project" value="InterPro"/>
</dbReference>
<dbReference type="GO" id="GO:0003714">
    <property type="term" value="F:transcription corepressor activity"/>
    <property type="evidence" value="ECO:0000314"/>
    <property type="project" value="TAIR"/>
</dbReference>
<dbReference type="GO" id="GO:0008270">
    <property type="term" value="F:zinc ion binding"/>
    <property type="evidence" value="ECO:0007669"/>
    <property type="project" value="UniProtKB-KW"/>
</dbReference>
<dbReference type="GO" id="GO:0006325">
    <property type="term" value="P:chromatin organization"/>
    <property type="evidence" value="ECO:0007669"/>
    <property type="project" value="UniProtKB-KW"/>
</dbReference>
<dbReference type="GO" id="GO:0009651">
    <property type="term" value="P:response to salt stress"/>
    <property type="evidence" value="ECO:0000270"/>
    <property type="project" value="TAIR"/>
</dbReference>
<dbReference type="GO" id="GO:0009414">
    <property type="term" value="P:response to water deprivation"/>
    <property type="evidence" value="ECO:0000270"/>
    <property type="project" value="TAIR"/>
</dbReference>
<dbReference type="CDD" id="cd15613">
    <property type="entry name" value="PHD_AL_plant"/>
    <property type="match status" value="1"/>
</dbReference>
<dbReference type="FunFam" id="3.30.40.10:FF:000306">
    <property type="entry name" value="PHD finger alfin-like protein"/>
    <property type="match status" value="1"/>
</dbReference>
<dbReference type="Gene3D" id="3.30.40.10">
    <property type="entry name" value="Zinc/RING finger domain, C3HC4 (zinc finger)"/>
    <property type="match status" value="1"/>
</dbReference>
<dbReference type="InterPro" id="IPR045104">
    <property type="entry name" value="Alfin"/>
</dbReference>
<dbReference type="InterPro" id="IPR021998">
    <property type="entry name" value="Alfin_N"/>
</dbReference>
<dbReference type="InterPro" id="IPR044104">
    <property type="entry name" value="PHD_AL_plant"/>
</dbReference>
<dbReference type="InterPro" id="IPR019786">
    <property type="entry name" value="Zinc_finger_PHD-type_CS"/>
</dbReference>
<dbReference type="InterPro" id="IPR011011">
    <property type="entry name" value="Znf_FYVE_PHD"/>
</dbReference>
<dbReference type="InterPro" id="IPR001965">
    <property type="entry name" value="Znf_PHD"/>
</dbReference>
<dbReference type="InterPro" id="IPR019787">
    <property type="entry name" value="Znf_PHD-finger"/>
</dbReference>
<dbReference type="InterPro" id="IPR013083">
    <property type="entry name" value="Znf_RING/FYVE/PHD"/>
</dbReference>
<dbReference type="PANTHER" id="PTHR12321">
    <property type="entry name" value="CPG BINDING PROTEIN"/>
    <property type="match status" value="1"/>
</dbReference>
<dbReference type="PANTHER" id="PTHR12321:SF98">
    <property type="entry name" value="PHD FINGER PROTEIN ALFIN-LIKE 5"/>
    <property type="match status" value="1"/>
</dbReference>
<dbReference type="Pfam" id="PF12165">
    <property type="entry name" value="Alfin"/>
    <property type="match status" value="1"/>
</dbReference>
<dbReference type="Pfam" id="PF00628">
    <property type="entry name" value="PHD"/>
    <property type="match status" value="1"/>
</dbReference>
<dbReference type="SMART" id="SM00249">
    <property type="entry name" value="PHD"/>
    <property type="match status" value="1"/>
</dbReference>
<dbReference type="SUPFAM" id="SSF57903">
    <property type="entry name" value="FYVE/PHD zinc finger"/>
    <property type="match status" value="1"/>
</dbReference>
<dbReference type="PROSITE" id="PS01359">
    <property type="entry name" value="ZF_PHD_1"/>
    <property type="match status" value="1"/>
</dbReference>
<dbReference type="PROSITE" id="PS50016">
    <property type="entry name" value="ZF_PHD_2"/>
    <property type="match status" value="1"/>
</dbReference>
<protein>
    <recommendedName>
        <fullName>PHD finger protein ALFIN-LIKE 5</fullName>
        <shortName>Protein AL5</shortName>
    </recommendedName>
</protein>
<evidence type="ECO:0000250" key="1"/>
<evidence type="ECO:0000250" key="2">
    <source>
        <dbReference type="UniProtKB" id="Q9M2B4"/>
    </source>
</evidence>
<evidence type="ECO:0000255" key="3">
    <source>
        <dbReference type="PROSITE-ProRule" id="PRU00146"/>
    </source>
</evidence>
<evidence type="ECO:0000256" key="4">
    <source>
        <dbReference type="SAM" id="MobiDB-lite"/>
    </source>
</evidence>
<evidence type="ECO:0000269" key="5">
    <source>
    </source>
</evidence>
<evidence type="ECO:0000305" key="6"/>
<comment type="function">
    <text evidence="1">Histone-binding component that specifically recognizes H3 tails trimethylated on 'Lys-4' (H3K4me3), which mark transcription start sites of virtually all active genes.</text>
</comment>
<comment type="subunit">
    <text evidence="1">Interacts with H3K4me3 and to a lesser extent with H3K4me2.</text>
</comment>
<comment type="subcellular location">
    <subcellularLocation>
        <location evidence="5">Nucleus</location>
    </subcellularLocation>
</comment>
<comment type="tissue specificity">
    <text evidence="5">Ubiquitously expressed.</text>
</comment>
<comment type="domain">
    <text evidence="1">The PHD-type zinc finger mediates the binding to H3K4me3.</text>
</comment>
<comment type="similarity">
    <text evidence="6">Belongs to the Alfin family.</text>
</comment>
<name>ALFL5_ARATH</name>
<accession>Q5XEM9</accession>
<gene>
    <name type="primary">AL5</name>
    <name type="ordered locus">At5g20510</name>
    <name type="ORF">F7C8.100</name>
</gene>
<keyword id="KW-0007">Acetylation</keyword>
<keyword id="KW-0156">Chromatin regulator</keyword>
<keyword id="KW-0479">Metal-binding</keyword>
<keyword id="KW-0539">Nucleus</keyword>
<keyword id="KW-1185">Reference proteome</keyword>
<keyword id="KW-0804">Transcription</keyword>
<keyword id="KW-0805">Transcription regulation</keyword>
<keyword id="KW-0862">Zinc</keyword>
<keyword id="KW-0863">Zinc-finger</keyword>
<proteinExistence type="evidence at transcript level"/>
<feature type="chain" id="PRO_0000412932" description="PHD finger protein ALFIN-LIKE 5">
    <location>
        <begin position="1"/>
        <end position="260"/>
    </location>
</feature>
<feature type="zinc finger region" description="PHD-type" evidence="3">
    <location>
        <begin position="204"/>
        <end position="256"/>
    </location>
</feature>
<feature type="region of interest" description="Disordered" evidence="4">
    <location>
        <begin position="142"/>
        <end position="203"/>
    </location>
</feature>
<feature type="compositionally biased region" description="Polar residues" evidence="4">
    <location>
        <begin position="148"/>
        <end position="165"/>
    </location>
</feature>
<feature type="compositionally biased region" description="Basic and acidic residues" evidence="4">
    <location>
        <begin position="167"/>
        <end position="181"/>
    </location>
</feature>
<feature type="compositionally biased region" description="Acidic residues" evidence="4">
    <location>
        <begin position="182"/>
        <end position="202"/>
    </location>
</feature>
<feature type="site" description="Histone H3K4me3 binding" evidence="1">
    <location>
        <position position="214"/>
    </location>
</feature>
<feature type="site" description="Histone H3K4me3 binding" evidence="1">
    <location>
        <position position="220"/>
    </location>
</feature>
<feature type="site" description="Histone H3K4me3 binding" evidence="1">
    <location>
        <position position="224"/>
    </location>
</feature>
<feature type="site" description="Histone H3K4me3 binding" evidence="1">
    <location>
        <position position="229"/>
    </location>
</feature>
<feature type="modified residue" description="N-acetylmethionine" evidence="2">
    <location>
        <position position="1"/>
    </location>
</feature>
<reference key="1">
    <citation type="journal article" date="2000" name="Nature">
        <title>Sequence and analysis of chromosome 5 of the plant Arabidopsis thaliana.</title>
        <authorList>
            <person name="Tabata S."/>
            <person name="Kaneko T."/>
            <person name="Nakamura Y."/>
            <person name="Kotani H."/>
            <person name="Kato T."/>
            <person name="Asamizu E."/>
            <person name="Miyajima N."/>
            <person name="Sasamoto S."/>
            <person name="Kimura T."/>
            <person name="Hosouchi T."/>
            <person name="Kawashima K."/>
            <person name="Kohara M."/>
            <person name="Matsumoto M."/>
            <person name="Matsuno A."/>
            <person name="Muraki A."/>
            <person name="Nakayama S."/>
            <person name="Nakazaki N."/>
            <person name="Naruo K."/>
            <person name="Okumura S."/>
            <person name="Shinpo S."/>
            <person name="Takeuchi C."/>
            <person name="Wada T."/>
            <person name="Watanabe A."/>
            <person name="Yamada M."/>
            <person name="Yasuda M."/>
            <person name="Sato S."/>
            <person name="de la Bastide M."/>
            <person name="Huang E."/>
            <person name="Spiegel L."/>
            <person name="Gnoj L."/>
            <person name="O'Shaughnessy A."/>
            <person name="Preston R."/>
            <person name="Habermann K."/>
            <person name="Murray J."/>
            <person name="Johnson D."/>
            <person name="Rohlfing T."/>
            <person name="Nelson J."/>
            <person name="Stoneking T."/>
            <person name="Pepin K."/>
            <person name="Spieth J."/>
            <person name="Sekhon M."/>
            <person name="Armstrong J."/>
            <person name="Becker M."/>
            <person name="Belter E."/>
            <person name="Cordum H."/>
            <person name="Cordes M."/>
            <person name="Courtney L."/>
            <person name="Courtney W."/>
            <person name="Dante M."/>
            <person name="Du H."/>
            <person name="Edwards J."/>
            <person name="Fryman J."/>
            <person name="Haakensen B."/>
            <person name="Lamar E."/>
            <person name="Latreille P."/>
            <person name="Leonard S."/>
            <person name="Meyer R."/>
            <person name="Mulvaney E."/>
            <person name="Ozersky P."/>
            <person name="Riley A."/>
            <person name="Strowmatt C."/>
            <person name="Wagner-McPherson C."/>
            <person name="Wollam A."/>
            <person name="Yoakum M."/>
            <person name="Bell M."/>
            <person name="Dedhia N."/>
            <person name="Parnell L."/>
            <person name="Shah R."/>
            <person name="Rodriguez M."/>
            <person name="Hoon See L."/>
            <person name="Vil D."/>
            <person name="Baker J."/>
            <person name="Kirchoff K."/>
            <person name="Toth K."/>
            <person name="King L."/>
            <person name="Bahret A."/>
            <person name="Miller B."/>
            <person name="Marra M.A."/>
            <person name="Martienssen R."/>
            <person name="McCombie W.R."/>
            <person name="Wilson R.K."/>
            <person name="Murphy G."/>
            <person name="Bancroft I."/>
            <person name="Volckaert G."/>
            <person name="Wambutt R."/>
            <person name="Duesterhoeft A."/>
            <person name="Stiekema W."/>
            <person name="Pohl T."/>
            <person name="Entian K.-D."/>
            <person name="Terryn N."/>
            <person name="Hartley N."/>
            <person name="Bent E."/>
            <person name="Johnson S."/>
            <person name="Langham S.-A."/>
            <person name="McCullagh B."/>
            <person name="Robben J."/>
            <person name="Grymonprez B."/>
            <person name="Zimmermann W."/>
            <person name="Ramsperger U."/>
            <person name="Wedler H."/>
            <person name="Balke K."/>
            <person name="Wedler E."/>
            <person name="Peters S."/>
            <person name="van Staveren M."/>
            <person name="Dirkse W."/>
            <person name="Mooijman P."/>
            <person name="Klein Lankhorst R."/>
            <person name="Weitzenegger T."/>
            <person name="Bothe G."/>
            <person name="Rose M."/>
            <person name="Hauf J."/>
            <person name="Berneiser S."/>
            <person name="Hempel S."/>
            <person name="Feldpausch M."/>
            <person name="Lamberth S."/>
            <person name="Villarroel R."/>
            <person name="Gielen J."/>
            <person name="Ardiles W."/>
            <person name="Bents O."/>
            <person name="Lemcke K."/>
            <person name="Kolesov G."/>
            <person name="Mayer K.F.X."/>
            <person name="Rudd S."/>
            <person name="Schoof H."/>
            <person name="Schueller C."/>
            <person name="Zaccaria P."/>
            <person name="Mewes H.-W."/>
            <person name="Bevan M."/>
            <person name="Fransz P.F."/>
        </authorList>
    </citation>
    <scope>NUCLEOTIDE SEQUENCE [LARGE SCALE GENOMIC DNA]</scope>
    <source>
        <strain>cv. Columbia</strain>
    </source>
</reference>
<reference key="2">
    <citation type="journal article" date="2017" name="Plant J.">
        <title>Araport11: a complete reannotation of the Arabidopsis thaliana reference genome.</title>
        <authorList>
            <person name="Cheng C.Y."/>
            <person name="Krishnakumar V."/>
            <person name="Chan A.P."/>
            <person name="Thibaud-Nissen F."/>
            <person name="Schobel S."/>
            <person name="Town C.D."/>
        </authorList>
    </citation>
    <scope>GENOME REANNOTATION</scope>
    <source>
        <strain>cv. Columbia</strain>
    </source>
</reference>
<reference key="3">
    <citation type="submission" date="2004-10" db="EMBL/GenBank/DDBJ databases">
        <title>Arabidopsis cDNA clones.</title>
        <authorList>
            <person name="Shinn P."/>
            <person name="Chen H."/>
            <person name="Cheuk R.F."/>
            <person name="Kim C.J."/>
            <person name="Ecker J.R."/>
        </authorList>
    </citation>
    <scope>NUCLEOTIDE SEQUENCE [LARGE SCALE MRNA]</scope>
    <source>
        <strain>cv. Columbia</strain>
    </source>
</reference>
<reference key="4">
    <citation type="submission" date="2005-01" db="EMBL/GenBank/DDBJ databases">
        <title>Arabidopsis ORF clones.</title>
        <authorList>
            <person name="Kim C.J."/>
            <person name="Chen H."/>
            <person name="Cheuk R.F."/>
            <person name="Shinn P."/>
            <person name="Ecker J.R."/>
        </authorList>
    </citation>
    <scope>NUCLEOTIDE SEQUENCE [LARGE SCALE MRNA]</scope>
    <source>
        <strain>cv. Columbia</strain>
    </source>
</reference>
<reference key="5">
    <citation type="journal article" date="2009" name="Plant J.">
        <title>Arabidopsis ING and Alfin1-like protein families localize to the nucleus and bind to H3K4me3/2 via plant homeodomain fingers.</title>
        <authorList>
            <person name="Lee W.Y."/>
            <person name="Lee D."/>
            <person name="Chung W.I."/>
            <person name="Kwon C.S."/>
        </authorList>
    </citation>
    <scope>GENE FAMILY</scope>
    <scope>SUBCELLULAR LOCATION</scope>
    <scope>TISSUE SPECIFICITY</scope>
</reference>
<organism>
    <name type="scientific">Arabidopsis thaliana</name>
    <name type="common">Mouse-ear cress</name>
    <dbReference type="NCBI Taxonomy" id="3702"/>
    <lineage>
        <taxon>Eukaryota</taxon>
        <taxon>Viridiplantae</taxon>
        <taxon>Streptophyta</taxon>
        <taxon>Embryophyta</taxon>
        <taxon>Tracheophyta</taxon>
        <taxon>Spermatophyta</taxon>
        <taxon>Magnoliopsida</taxon>
        <taxon>eudicotyledons</taxon>
        <taxon>Gunneridae</taxon>
        <taxon>Pentapetalae</taxon>
        <taxon>rosids</taxon>
        <taxon>malvids</taxon>
        <taxon>Brassicales</taxon>
        <taxon>Brassicaceae</taxon>
        <taxon>Camelineae</taxon>
        <taxon>Arabidopsis</taxon>
    </lineage>
</organism>
<sequence>MEGGTAHYSPRTVEEVFRDFKGRRAGIIQALTTDVEDFFQQCDPEKQNLCLYGFPNEVWEVNLPAEEVPPELPEPALGINFARDGMQERNWLSLVAVHSDAWLLSVSFYFGSRFGFDRADRKRLFSMINEVPTVYEVVTGNAEKQTKEMPSSANQNGNRSKSNSKMRGLESKSSKTIHAKDEEEGLELEEGEEEEDEDEDEHGETLCGACGDNYASDEFWICCDMCEKWFHGECVKITPARAEHIKHYKCPTCSNKRARP</sequence>